<accession>S0F1N7</accession>
<proteinExistence type="inferred from homology"/>
<sequence>MNTATGVIALLVLATVIGCIEAEETRADLQGAFESYEGEAADKIFRRSPTCIPSGQPCPYNENCCSKSCTYKENENGNTVQRCD</sequence>
<organism>
    <name type="scientific">Hadronyche venenata</name>
    <name type="common">Tasmanian funnel-web spider</name>
    <name type="synonym">Atrax venenatus</name>
    <dbReference type="NCBI Taxonomy" id="1337083"/>
    <lineage>
        <taxon>Eukaryota</taxon>
        <taxon>Metazoa</taxon>
        <taxon>Ecdysozoa</taxon>
        <taxon>Arthropoda</taxon>
        <taxon>Chelicerata</taxon>
        <taxon>Arachnida</taxon>
        <taxon>Araneae</taxon>
        <taxon>Mygalomorphae</taxon>
        <taxon>Hexathelidae</taxon>
        <taxon>Hadronyche</taxon>
    </lineage>
</organism>
<keyword id="KW-0108">Calcium channel impairing toxin</keyword>
<keyword id="KW-0165">Cleavage on pair of basic residues</keyword>
<keyword id="KW-1015">Disulfide bond</keyword>
<keyword id="KW-0872">Ion channel impairing toxin</keyword>
<keyword id="KW-0960">Knottin</keyword>
<keyword id="KW-0964">Secreted</keyword>
<keyword id="KW-0732">Signal</keyword>
<keyword id="KW-0800">Toxin</keyword>
<keyword id="KW-1218">Voltage-gated calcium channel impairing toxin</keyword>
<comment type="function">
    <text evidence="2">Inhibits insect, but not mammalian, voltage-gated calcium channels (Cav).</text>
</comment>
<comment type="subcellular location">
    <subcellularLocation>
        <location evidence="5">Secreted</location>
    </subcellularLocation>
</comment>
<comment type="tissue specificity">
    <text evidence="5">Expressed by the venom gland.</text>
</comment>
<comment type="domain">
    <text evidence="1">The presence of a 'disulfide through disulfide knot' structurally defines this protein as a knottin.</text>
</comment>
<comment type="miscellaneous">
    <text evidence="5">Several paralogs that code for the same precursor are shown in this entry, whereas other paralogs are shown in AC S0F211, AC S0F205, AC S0F1N1, AC S0F212.</text>
</comment>
<comment type="similarity">
    <text evidence="4">Belongs to the neurotoxin 08 (Shiva) family. 01 (omega toxin) subfamily.</text>
</comment>
<reference key="1">
    <citation type="journal article" date="2014" name="BMC Genomics">
        <title>Diversification of a single ancestral gene into a successful toxin superfamily in highly venomous Australian funnel-web spiders.</title>
        <authorList>
            <person name="Pineda S.S."/>
            <person name="Sollod B.L."/>
            <person name="Wilson D."/>
            <person name="Darling A."/>
            <person name="Sunagar K."/>
            <person name="Undheim E.A."/>
            <person name="Kely L."/>
            <person name="Antunes A."/>
            <person name="Fry B.G."/>
            <person name="King G.F."/>
        </authorList>
    </citation>
    <scope>NUCLEOTIDE SEQUENCE [MRNA]</scope>
    <source>
        <tissue>Venom gland</tissue>
    </source>
</reference>
<evidence type="ECO:0000250" key="1"/>
<evidence type="ECO:0000250" key="2">
    <source>
        <dbReference type="UniProtKB" id="P56207"/>
    </source>
</evidence>
<evidence type="ECO:0000255" key="3"/>
<evidence type="ECO:0000303" key="4">
    <source>
    </source>
</evidence>
<evidence type="ECO:0000305" key="5">
    <source>
    </source>
</evidence>
<protein>
    <recommendedName>
        <fullName evidence="4">Omega-hexatoxin-Hvn1b</fullName>
        <shortName evidence="5">Omega-HXTX-Hvn1b</shortName>
    </recommendedName>
</protein>
<dbReference type="EMBL" id="HG001290">
    <property type="protein sequence ID" value="CDF44151.1"/>
    <property type="molecule type" value="mRNA"/>
</dbReference>
<dbReference type="EMBL" id="HG001291">
    <property type="protein sequence ID" value="CDF44152.1"/>
    <property type="molecule type" value="mRNA"/>
</dbReference>
<dbReference type="SMR" id="S0F1N7"/>
<dbReference type="GO" id="GO:0005576">
    <property type="term" value="C:extracellular region"/>
    <property type="evidence" value="ECO:0007669"/>
    <property type="project" value="UniProtKB-SubCell"/>
</dbReference>
<dbReference type="GO" id="GO:0019855">
    <property type="term" value="F:calcium channel inhibitor activity"/>
    <property type="evidence" value="ECO:0007669"/>
    <property type="project" value="InterPro"/>
</dbReference>
<dbReference type="GO" id="GO:0090729">
    <property type="term" value="F:toxin activity"/>
    <property type="evidence" value="ECO:0007669"/>
    <property type="project" value="UniProtKB-KW"/>
</dbReference>
<dbReference type="GO" id="GO:0006952">
    <property type="term" value="P:defense response"/>
    <property type="evidence" value="ECO:0007669"/>
    <property type="project" value="InterPro"/>
</dbReference>
<dbReference type="InterPro" id="IPR009415">
    <property type="entry name" value="Omega-atracotox"/>
</dbReference>
<dbReference type="InterPro" id="IPR018071">
    <property type="entry name" value="Omega-atracotox_CS"/>
</dbReference>
<dbReference type="Pfam" id="PF06357">
    <property type="entry name" value="Omega-toxin"/>
    <property type="match status" value="1"/>
</dbReference>
<dbReference type="SUPFAM" id="SSF57059">
    <property type="entry name" value="omega toxin-like"/>
    <property type="match status" value="1"/>
</dbReference>
<dbReference type="PROSITE" id="PS60016">
    <property type="entry name" value="OMEGA_ACTX_1"/>
    <property type="match status" value="1"/>
</dbReference>
<feature type="signal peptide" evidence="3">
    <location>
        <begin position="1"/>
        <end position="22"/>
    </location>
</feature>
<feature type="propeptide" id="PRO_0000430912" evidence="1">
    <location>
        <begin position="23"/>
        <end position="45"/>
    </location>
</feature>
<feature type="chain" id="PRO_0000430913" description="Omega-hexatoxin-Hvn1b">
    <location>
        <begin position="48"/>
        <end position="84"/>
    </location>
</feature>
<feature type="site" description="Critical for insecticidal activity" evidence="2">
    <location>
        <position position="57"/>
    </location>
</feature>
<feature type="site" description="Critical for insecticidal activity" evidence="2">
    <location>
        <position position="74"/>
    </location>
</feature>
<feature type="site" description="Critical for insecticidal activity" evidence="2">
    <location>
        <position position="82"/>
    </location>
</feature>
<feature type="disulfide bond" evidence="2">
    <location>
        <begin position="51"/>
        <end position="65"/>
    </location>
</feature>
<feature type="disulfide bond" evidence="2">
    <location>
        <begin position="58"/>
        <end position="69"/>
    </location>
</feature>
<feature type="disulfide bond" evidence="2">
    <location>
        <begin position="64"/>
        <end position="83"/>
    </location>
</feature>
<name>TO1B_HADVN</name>